<gene>
    <name evidence="1" type="primary">rsmG</name>
    <name type="ordered locus">RSal33209_3553</name>
</gene>
<feature type="chain" id="PRO_1000075227" description="Ribosomal RNA small subunit methyltransferase G">
    <location>
        <begin position="1"/>
        <end position="215"/>
    </location>
</feature>
<feature type="binding site" evidence="1">
    <location>
        <position position="73"/>
    </location>
    <ligand>
        <name>S-adenosyl-L-methionine</name>
        <dbReference type="ChEBI" id="CHEBI:59789"/>
    </ligand>
</feature>
<feature type="binding site" evidence="1">
    <location>
        <position position="78"/>
    </location>
    <ligand>
        <name>S-adenosyl-L-methionine</name>
        <dbReference type="ChEBI" id="CHEBI:59789"/>
    </ligand>
</feature>
<feature type="binding site" evidence="1">
    <location>
        <begin position="125"/>
        <end position="126"/>
    </location>
    <ligand>
        <name>S-adenosyl-L-methionine</name>
        <dbReference type="ChEBI" id="CHEBI:59789"/>
    </ligand>
</feature>
<feature type="binding site" evidence="1">
    <location>
        <position position="140"/>
    </location>
    <ligand>
        <name>S-adenosyl-L-methionine</name>
        <dbReference type="ChEBI" id="CHEBI:59789"/>
    </ligand>
</feature>
<reference key="1">
    <citation type="journal article" date="2008" name="J. Bacteriol.">
        <title>Genome sequence of the fish pathogen Renibacterium salmoninarum suggests reductive evolution away from an environmental Arthrobacter ancestor.</title>
        <authorList>
            <person name="Wiens G.D."/>
            <person name="Rockey D.D."/>
            <person name="Wu Z."/>
            <person name="Chang J."/>
            <person name="Levy R."/>
            <person name="Crane S."/>
            <person name="Chen D.S."/>
            <person name="Capri G.R."/>
            <person name="Burnett J.R."/>
            <person name="Sudheesh P.S."/>
            <person name="Schipma M.J."/>
            <person name="Burd H."/>
            <person name="Bhattacharyya A."/>
            <person name="Rhodes L.D."/>
            <person name="Kaul R."/>
            <person name="Strom M.S."/>
        </authorList>
    </citation>
    <scope>NUCLEOTIDE SEQUENCE [LARGE SCALE GENOMIC DNA]</scope>
    <source>
        <strain>ATCC 33209 / DSM 20767 / JCM 11484 / NBRC 15589 / NCIMB 2235</strain>
    </source>
</reference>
<proteinExistence type="inferred from homology"/>
<evidence type="ECO:0000255" key="1">
    <source>
        <dbReference type="HAMAP-Rule" id="MF_00074"/>
    </source>
</evidence>
<organism>
    <name type="scientific">Renibacterium salmoninarum (strain ATCC 33209 / DSM 20767 / JCM 11484 / NBRC 15589 / NCIMB 2235)</name>
    <dbReference type="NCBI Taxonomy" id="288705"/>
    <lineage>
        <taxon>Bacteria</taxon>
        <taxon>Bacillati</taxon>
        <taxon>Actinomycetota</taxon>
        <taxon>Actinomycetes</taxon>
        <taxon>Micrococcales</taxon>
        <taxon>Micrococcaceae</taxon>
        <taxon>Renibacterium</taxon>
    </lineage>
</organism>
<accession>A9WVP1</accession>
<protein>
    <recommendedName>
        <fullName evidence="1">Ribosomal RNA small subunit methyltransferase G</fullName>
        <ecNumber evidence="1">2.1.1.-</ecNumber>
    </recommendedName>
    <alternativeName>
        <fullName evidence="1">16S rRNA 7-methylguanosine methyltransferase</fullName>
        <shortName evidence="1">16S rRNA m7G methyltransferase</shortName>
    </alternativeName>
</protein>
<comment type="function">
    <text evidence="1">Specifically methylates the N7 position of guanine in position 518 of 16S rRNA.</text>
</comment>
<comment type="subcellular location">
    <subcellularLocation>
        <location evidence="1">Cytoplasm</location>
    </subcellularLocation>
</comment>
<comment type="similarity">
    <text evidence="1">Belongs to the methyltransferase superfamily. RNA methyltransferase RsmG family.</text>
</comment>
<keyword id="KW-0963">Cytoplasm</keyword>
<keyword id="KW-0489">Methyltransferase</keyword>
<keyword id="KW-1185">Reference proteome</keyword>
<keyword id="KW-0698">rRNA processing</keyword>
<keyword id="KW-0949">S-adenosyl-L-methionine</keyword>
<keyword id="KW-0808">Transferase</keyword>
<name>RSMG_RENSM</name>
<dbReference type="EC" id="2.1.1.-" evidence="1"/>
<dbReference type="EMBL" id="CP000910">
    <property type="protein sequence ID" value="ABY25262.1"/>
    <property type="molecule type" value="Genomic_DNA"/>
</dbReference>
<dbReference type="RefSeq" id="WP_012246885.1">
    <property type="nucleotide sequence ID" value="NC_010168.1"/>
</dbReference>
<dbReference type="SMR" id="A9WVP1"/>
<dbReference type="STRING" id="288705.RSal33209_3553"/>
<dbReference type="KEGG" id="rsa:RSal33209_3553"/>
<dbReference type="eggNOG" id="COG0357">
    <property type="taxonomic scope" value="Bacteria"/>
</dbReference>
<dbReference type="HOGENOM" id="CLU_065341_5_0_11"/>
<dbReference type="Proteomes" id="UP000002007">
    <property type="component" value="Chromosome"/>
</dbReference>
<dbReference type="GO" id="GO:0005829">
    <property type="term" value="C:cytosol"/>
    <property type="evidence" value="ECO:0007669"/>
    <property type="project" value="TreeGrafter"/>
</dbReference>
<dbReference type="GO" id="GO:0070043">
    <property type="term" value="F:rRNA (guanine-N7-)-methyltransferase activity"/>
    <property type="evidence" value="ECO:0007669"/>
    <property type="project" value="UniProtKB-UniRule"/>
</dbReference>
<dbReference type="Gene3D" id="3.40.50.150">
    <property type="entry name" value="Vaccinia Virus protein VP39"/>
    <property type="match status" value="1"/>
</dbReference>
<dbReference type="HAMAP" id="MF_00074">
    <property type="entry name" value="16SrRNA_methyltr_G"/>
    <property type="match status" value="1"/>
</dbReference>
<dbReference type="InterPro" id="IPR003682">
    <property type="entry name" value="rRNA_ssu_MeTfrase_G"/>
</dbReference>
<dbReference type="InterPro" id="IPR029063">
    <property type="entry name" value="SAM-dependent_MTases_sf"/>
</dbReference>
<dbReference type="NCBIfam" id="TIGR00138">
    <property type="entry name" value="rsmG_gidB"/>
    <property type="match status" value="1"/>
</dbReference>
<dbReference type="PANTHER" id="PTHR31760">
    <property type="entry name" value="S-ADENOSYL-L-METHIONINE-DEPENDENT METHYLTRANSFERASES SUPERFAMILY PROTEIN"/>
    <property type="match status" value="1"/>
</dbReference>
<dbReference type="PANTHER" id="PTHR31760:SF0">
    <property type="entry name" value="S-ADENOSYL-L-METHIONINE-DEPENDENT METHYLTRANSFERASES SUPERFAMILY PROTEIN"/>
    <property type="match status" value="1"/>
</dbReference>
<dbReference type="Pfam" id="PF02527">
    <property type="entry name" value="GidB"/>
    <property type="match status" value="1"/>
</dbReference>
<dbReference type="SUPFAM" id="SSF53335">
    <property type="entry name" value="S-adenosyl-L-methionine-dependent methyltransferases"/>
    <property type="match status" value="1"/>
</dbReference>
<sequence length="215" mass="22840">MLEMTEAVASAAHSVFGDRLPLAQRYVEHLATSGIERGLIGPREVPRLWDRHVLNCAVVVELIEIDATVADVGSGAGLPGLCLALARPDLSITLIEPLERRVTWLSEVVADLGLSDQVTLFRMRAEQAVDEVNCSVVTARAVSALDKLAGLTIPLLHGNGQFLAVKGRSAAEEITKAAKAVRKLGGTRTDVLVAGSSVLEEPTTVVRILVGSAHR</sequence>